<protein>
    <recommendedName>
        <fullName evidence="1">3-isopropylmalate dehydratase small subunit</fullName>
        <ecNumber evidence="1">4.2.1.33</ecNumber>
    </recommendedName>
    <alternativeName>
        <fullName evidence="1">Alpha-IPM isomerase</fullName>
        <shortName evidence="1">IPMI</shortName>
    </alternativeName>
    <alternativeName>
        <fullName evidence="1">Isopropylmalate isomerase</fullName>
    </alternativeName>
</protein>
<accession>A7MQ53</accession>
<organism>
    <name type="scientific">Cronobacter sakazakii (strain ATCC BAA-894)</name>
    <name type="common">Enterobacter sakazakii</name>
    <dbReference type="NCBI Taxonomy" id="290339"/>
    <lineage>
        <taxon>Bacteria</taxon>
        <taxon>Pseudomonadati</taxon>
        <taxon>Pseudomonadota</taxon>
        <taxon>Gammaproteobacteria</taxon>
        <taxon>Enterobacterales</taxon>
        <taxon>Enterobacteriaceae</taxon>
        <taxon>Cronobacter</taxon>
    </lineage>
</organism>
<gene>
    <name evidence="1" type="primary">leuD</name>
    <name type="ordered locus">ESA_03267</name>
</gene>
<comment type="function">
    <text evidence="1">Catalyzes the isomerization between 2-isopropylmalate and 3-isopropylmalate, via the formation of 2-isopropylmaleate.</text>
</comment>
<comment type="catalytic activity">
    <reaction evidence="1">
        <text>(2R,3S)-3-isopropylmalate = (2S)-2-isopropylmalate</text>
        <dbReference type="Rhea" id="RHEA:32287"/>
        <dbReference type="ChEBI" id="CHEBI:1178"/>
        <dbReference type="ChEBI" id="CHEBI:35121"/>
        <dbReference type="EC" id="4.2.1.33"/>
    </reaction>
</comment>
<comment type="pathway">
    <text evidence="1">Amino-acid biosynthesis; L-leucine biosynthesis; L-leucine from 3-methyl-2-oxobutanoate: step 2/4.</text>
</comment>
<comment type="subunit">
    <text evidence="1">Heterodimer of LeuC and LeuD.</text>
</comment>
<comment type="similarity">
    <text evidence="1">Belongs to the LeuD family. LeuD type 1 subfamily.</text>
</comment>
<dbReference type="EC" id="4.2.1.33" evidence="1"/>
<dbReference type="EMBL" id="CP000783">
    <property type="protein sequence ID" value="ABU78489.1"/>
    <property type="molecule type" value="Genomic_DNA"/>
</dbReference>
<dbReference type="RefSeq" id="WP_012125770.1">
    <property type="nucleotide sequence ID" value="NC_009778.1"/>
</dbReference>
<dbReference type="SMR" id="A7MQ53"/>
<dbReference type="KEGG" id="esa:ESA_03267"/>
<dbReference type="PATRIC" id="fig|290339.8.peg.2896"/>
<dbReference type="HOGENOM" id="CLU_081378_0_3_6"/>
<dbReference type="UniPathway" id="UPA00048">
    <property type="reaction ID" value="UER00071"/>
</dbReference>
<dbReference type="Proteomes" id="UP000000260">
    <property type="component" value="Chromosome"/>
</dbReference>
<dbReference type="GO" id="GO:0009316">
    <property type="term" value="C:3-isopropylmalate dehydratase complex"/>
    <property type="evidence" value="ECO:0007669"/>
    <property type="project" value="InterPro"/>
</dbReference>
<dbReference type="GO" id="GO:0003861">
    <property type="term" value="F:3-isopropylmalate dehydratase activity"/>
    <property type="evidence" value="ECO:0007669"/>
    <property type="project" value="UniProtKB-UniRule"/>
</dbReference>
<dbReference type="GO" id="GO:0009098">
    <property type="term" value="P:L-leucine biosynthetic process"/>
    <property type="evidence" value="ECO:0007669"/>
    <property type="project" value="UniProtKB-UniRule"/>
</dbReference>
<dbReference type="CDD" id="cd01577">
    <property type="entry name" value="IPMI_Swivel"/>
    <property type="match status" value="1"/>
</dbReference>
<dbReference type="FunFam" id="3.20.19.10:FF:000003">
    <property type="entry name" value="3-isopropylmalate dehydratase small subunit"/>
    <property type="match status" value="1"/>
</dbReference>
<dbReference type="Gene3D" id="3.20.19.10">
    <property type="entry name" value="Aconitase, domain 4"/>
    <property type="match status" value="1"/>
</dbReference>
<dbReference type="HAMAP" id="MF_01031">
    <property type="entry name" value="LeuD_type1"/>
    <property type="match status" value="1"/>
</dbReference>
<dbReference type="InterPro" id="IPR004431">
    <property type="entry name" value="3-IsopropMal_deHydase_ssu"/>
</dbReference>
<dbReference type="InterPro" id="IPR015928">
    <property type="entry name" value="Aconitase/3IPM_dehydase_swvl"/>
</dbReference>
<dbReference type="InterPro" id="IPR000573">
    <property type="entry name" value="AconitaseA/IPMdHydase_ssu_swvl"/>
</dbReference>
<dbReference type="InterPro" id="IPR033940">
    <property type="entry name" value="IPMI_Swivel"/>
</dbReference>
<dbReference type="InterPro" id="IPR050075">
    <property type="entry name" value="LeuD"/>
</dbReference>
<dbReference type="NCBIfam" id="TIGR00171">
    <property type="entry name" value="leuD"/>
    <property type="match status" value="1"/>
</dbReference>
<dbReference type="NCBIfam" id="NF002458">
    <property type="entry name" value="PRK01641.1"/>
    <property type="match status" value="1"/>
</dbReference>
<dbReference type="PANTHER" id="PTHR43345:SF5">
    <property type="entry name" value="3-ISOPROPYLMALATE DEHYDRATASE SMALL SUBUNIT"/>
    <property type="match status" value="1"/>
</dbReference>
<dbReference type="PANTHER" id="PTHR43345">
    <property type="entry name" value="3-ISOPROPYLMALATE DEHYDRATASE SMALL SUBUNIT 2-RELATED-RELATED"/>
    <property type="match status" value="1"/>
</dbReference>
<dbReference type="Pfam" id="PF00694">
    <property type="entry name" value="Aconitase_C"/>
    <property type="match status" value="1"/>
</dbReference>
<dbReference type="SUPFAM" id="SSF52016">
    <property type="entry name" value="LeuD/IlvD-like"/>
    <property type="match status" value="1"/>
</dbReference>
<feature type="chain" id="PRO_1000063761" description="3-isopropylmalate dehydratase small subunit">
    <location>
        <begin position="1"/>
        <end position="201"/>
    </location>
</feature>
<evidence type="ECO:0000255" key="1">
    <source>
        <dbReference type="HAMAP-Rule" id="MF_01031"/>
    </source>
</evidence>
<name>LEUD_CROS8</name>
<sequence length="201" mass="22414">MAEKFTQHTGLVVPLDAANVDTDAIIPKQFLQKVTRTGFGAHLFNDWRFLDDKGEQPNPEFVLNFPEYQGASILLARENFGCGSSREHAPWALTDYGFKVVIAPSFADIFYGNSFNNQLLPVTLSDEEVDEMFALVKANPGIRFEVDLEAQVVKAGDKSYSFSIDAFRRHCMLNGLDSIGLTLQHEDAIAAYEKKQPAFMG</sequence>
<keyword id="KW-0028">Amino-acid biosynthesis</keyword>
<keyword id="KW-0100">Branched-chain amino acid biosynthesis</keyword>
<keyword id="KW-0432">Leucine biosynthesis</keyword>
<keyword id="KW-0456">Lyase</keyword>
<keyword id="KW-1185">Reference proteome</keyword>
<proteinExistence type="inferred from homology"/>
<reference key="1">
    <citation type="journal article" date="2010" name="PLoS ONE">
        <title>Genome sequence of Cronobacter sakazakii BAA-894 and comparative genomic hybridization analysis with other Cronobacter species.</title>
        <authorList>
            <person name="Kucerova E."/>
            <person name="Clifton S.W."/>
            <person name="Xia X.Q."/>
            <person name="Long F."/>
            <person name="Porwollik S."/>
            <person name="Fulton L."/>
            <person name="Fronick C."/>
            <person name="Minx P."/>
            <person name="Kyung K."/>
            <person name="Warren W."/>
            <person name="Fulton R."/>
            <person name="Feng D."/>
            <person name="Wollam A."/>
            <person name="Shah N."/>
            <person name="Bhonagiri V."/>
            <person name="Nash W.E."/>
            <person name="Hallsworth-Pepin K."/>
            <person name="Wilson R.K."/>
            <person name="McClelland M."/>
            <person name="Forsythe S.J."/>
        </authorList>
    </citation>
    <scope>NUCLEOTIDE SEQUENCE [LARGE SCALE GENOMIC DNA]</scope>
    <source>
        <strain>ATCC BAA-894</strain>
    </source>
</reference>